<accession>Q92AY8</accession>
<proteinExistence type="inferred from homology"/>
<evidence type="ECO:0000255" key="1">
    <source>
        <dbReference type="HAMAP-Rule" id="MF_00731"/>
    </source>
</evidence>
<evidence type="ECO:0000305" key="2"/>
<gene>
    <name evidence="1" type="primary">menE</name>
    <name type="ordered locus">lin1780</name>
</gene>
<dbReference type="EC" id="6.2.1.26" evidence="1"/>
<dbReference type="EMBL" id="AL596169">
    <property type="protein sequence ID" value="CAC97011.1"/>
    <property type="status" value="ALT_INIT"/>
    <property type="molecule type" value="Genomic_DNA"/>
</dbReference>
<dbReference type="PIR" id="AC1655">
    <property type="entry name" value="AC1655"/>
</dbReference>
<dbReference type="SMR" id="Q92AY8"/>
<dbReference type="STRING" id="272626.gene:17566111"/>
<dbReference type="KEGG" id="lin:menE"/>
<dbReference type="eggNOG" id="COG0318">
    <property type="taxonomic scope" value="Bacteria"/>
</dbReference>
<dbReference type="HOGENOM" id="CLU_000022_59_0_9"/>
<dbReference type="UniPathway" id="UPA00079"/>
<dbReference type="UniPathway" id="UPA01057">
    <property type="reaction ID" value="UER00166"/>
</dbReference>
<dbReference type="Proteomes" id="UP000002513">
    <property type="component" value="Chromosome"/>
</dbReference>
<dbReference type="GO" id="GO:0005524">
    <property type="term" value="F:ATP binding"/>
    <property type="evidence" value="ECO:0007669"/>
    <property type="project" value="UniProtKB-KW"/>
</dbReference>
<dbReference type="GO" id="GO:0031956">
    <property type="term" value="F:medium-chain fatty acid-CoA ligase activity"/>
    <property type="evidence" value="ECO:0007669"/>
    <property type="project" value="TreeGrafter"/>
</dbReference>
<dbReference type="GO" id="GO:0008756">
    <property type="term" value="F:o-succinylbenzoate-CoA ligase activity"/>
    <property type="evidence" value="ECO:0007669"/>
    <property type="project" value="UniProtKB-UniRule"/>
</dbReference>
<dbReference type="GO" id="GO:0006631">
    <property type="term" value="P:fatty acid metabolic process"/>
    <property type="evidence" value="ECO:0007669"/>
    <property type="project" value="TreeGrafter"/>
</dbReference>
<dbReference type="GO" id="GO:0009234">
    <property type="term" value="P:menaquinone biosynthetic process"/>
    <property type="evidence" value="ECO:0007669"/>
    <property type="project" value="UniProtKB-UniRule"/>
</dbReference>
<dbReference type="CDD" id="cd05912">
    <property type="entry name" value="OSB_CoA_lg"/>
    <property type="match status" value="1"/>
</dbReference>
<dbReference type="FunFam" id="3.30.300.30:FF:000008">
    <property type="entry name" value="2,3-dihydroxybenzoate-AMP ligase"/>
    <property type="match status" value="1"/>
</dbReference>
<dbReference type="Gene3D" id="3.30.300.30">
    <property type="match status" value="1"/>
</dbReference>
<dbReference type="Gene3D" id="3.40.50.12780">
    <property type="entry name" value="N-terminal domain of ligase-like"/>
    <property type="match status" value="1"/>
</dbReference>
<dbReference type="HAMAP" id="MF_00731">
    <property type="entry name" value="MenE"/>
    <property type="match status" value="1"/>
</dbReference>
<dbReference type="InterPro" id="IPR025110">
    <property type="entry name" value="AMP-bd_C"/>
</dbReference>
<dbReference type="InterPro" id="IPR045851">
    <property type="entry name" value="AMP-bd_C_sf"/>
</dbReference>
<dbReference type="InterPro" id="IPR020845">
    <property type="entry name" value="AMP-binding_CS"/>
</dbReference>
<dbReference type="InterPro" id="IPR000873">
    <property type="entry name" value="AMP-dep_synth/lig_dom"/>
</dbReference>
<dbReference type="InterPro" id="IPR042099">
    <property type="entry name" value="ANL_N_sf"/>
</dbReference>
<dbReference type="InterPro" id="IPR010192">
    <property type="entry name" value="MenE"/>
</dbReference>
<dbReference type="NCBIfam" id="TIGR01923">
    <property type="entry name" value="menE"/>
    <property type="match status" value="1"/>
</dbReference>
<dbReference type="NCBIfam" id="NF002966">
    <property type="entry name" value="PRK03640.1"/>
    <property type="match status" value="1"/>
</dbReference>
<dbReference type="PANTHER" id="PTHR43201">
    <property type="entry name" value="ACYL-COA SYNTHETASE"/>
    <property type="match status" value="1"/>
</dbReference>
<dbReference type="PANTHER" id="PTHR43201:SF5">
    <property type="entry name" value="MEDIUM-CHAIN ACYL-COA LIGASE ACSF2, MITOCHONDRIAL"/>
    <property type="match status" value="1"/>
</dbReference>
<dbReference type="Pfam" id="PF00501">
    <property type="entry name" value="AMP-binding"/>
    <property type="match status" value="1"/>
</dbReference>
<dbReference type="Pfam" id="PF13193">
    <property type="entry name" value="AMP-binding_C"/>
    <property type="match status" value="1"/>
</dbReference>
<dbReference type="SUPFAM" id="SSF56801">
    <property type="entry name" value="Acetyl-CoA synthetase-like"/>
    <property type="match status" value="1"/>
</dbReference>
<dbReference type="PROSITE" id="PS00455">
    <property type="entry name" value="AMP_BINDING"/>
    <property type="match status" value="1"/>
</dbReference>
<reference key="1">
    <citation type="journal article" date="2001" name="Science">
        <title>Comparative genomics of Listeria species.</title>
        <authorList>
            <person name="Glaser P."/>
            <person name="Frangeul L."/>
            <person name="Buchrieser C."/>
            <person name="Rusniok C."/>
            <person name="Amend A."/>
            <person name="Baquero F."/>
            <person name="Berche P."/>
            <person name="Bloecker H."/>
            <person name="Brandt P."/>
            <person name="Chakraborty T."/>
            <person name="Charbit A."/>
            <person name="Chetouani F."/>
            <person name="Couve E."/>
            <person name="de Daruvar A."/>
            <person name="Dehoux P."/>
            <person name="Domann E."/>
            <person name="Dominguez-Bernal G."/>
            <person name="Duchaud E."/>
            <person name="Durant L."/>
            <person name="Dussurget O."/>
            <person name="Entian K.-D."/>
            <person name="Fsihi H."/>
            <person name="Garcia-del Portillo F."/>
            <person name="Garrido P."/>
            <person name="Gautier L."/>
            <person name="Goebel W."/>
            <person name="Gomez-Lopez N."/>
            <person name="Hain T."/>
            <person name="Hauf J."/>
            <person name="Jackson D."/>
            <person name="Jones L.-M."/>
            <person name="Kaerst U."/>
            <person name="Kreft J."/>
            <person name="Kuhn M."/>
            <person name="Kunst F."/>
            <person name="Kurapkat G."/>
            <person name="Madueno E."/>
            <person name="Maitournam A."/>
            <person name="Mata Vicente J."/>
            <person name="Ng E."/>
            <person name="Nedjari H."/>
            <person name="Nordsiek G."/>
            <person name="Novella S."/>
            <person name="de Pablos B."/>
            <person name="Perez-Diaz J.-C."/>
            <person name="Purcell R."/>
            <person name="Remmel B."/>
            <person name="Rose M."/>
            <person name="Schlueter T."/>
            <person name="Simoes N."/>
            <person name="Tierrez A."/>
            <person name="Vazquez-Boland J.-A."/>
            <person name="Voss H."/>
            <person name="Wehland J."/>
            <person name="Cossart P."/>
        </authorList>
    </citation>
    <scope>NUCLEOTIDE SEQUENCE [LARGE SCALE GENOMIC DNA]</scope>
    <source>
        <strain>ATCC BAA-680 / CLIP 11262</strain>
    </source>
</reference>
<keyword id="KW-0067">ATP-binding</keyword>
<keyword id="KW-0436">Ligase</keyword>
<keyword id="KW-0474">Menaquinone biosynthesis</keyword>
<keyword id="KW-0547">Nucleotide-binding</keyword>
<sequence length="467" mass="51712">MTNWLQKRVRLSPGETALVFEGKQETFEEIYEAVEKLAGKLFARGIRKDEMVALLGKNDRMTFLLIHALQQLGAITLFLNNRLTKKEITFQLANAEVKQVIVADAFVDKVTSGISYEELQQTTYVEPDLCKTWDLSRTASVMYTSGTTGKPKGVMQTYENHWWSAVSSVLNLGLTEKDSWLCAVPIFHISGLSIMMRSVIYGIPVYLEEHFDEEKITQLLESGKISTISVVTSMLERLLKIQGGSYHPNVRTVLLGGGPANKAVLEICKQRDIPLVQSFGMTETASQIVTLPPKDALNKIGSSGKALFPAEVKIADDGEILLKGPSITPGYLHNEKATAKAFIDGWFKTGDIGYLDEEGFLFVLERRSDLIISGGENIYPTEIEHVIGAYEAVEEVAVVGKSDAKWGSVPVAFIVVNEGFDEGVLKDICQTNLASFKIPKQITIVEHLPKTASGKIQRNKLKERHSN</sequence>
<comment type="function">
    <text evidence="1">Converts 2-succinylbenzoate (OSB) to 2-succinylbenzoyl-CoA (OSB-CoA).</text>
</comment>
<comment type="catalytic activity">
    <reaction evidence="1">
        <text>2-succinylbenzoate + ATP + CoA = 2-succinylbenzoyl-CoA + AMP + diphosphate</text>
        <dbReference type="Rhea" id="RHEA:17009"/>
        <dbReference type="ChEBI" id="CHEBI:18325"/>
        <dbReference type="ChEBI" id="CHEBI:30616"/>
        <dbReference type="ChEBI" id="CHEBI:33019"/>
        <dbReference type="ChEBI" id="CHEBI:57287"/>
        <dbReference type="ChEBI" id="CHEBI:57364"/>
        <dbReference type="ChEBI" id="CHEBI:456215"/>
        <dbReference type="EC" id="6.2.1.26"/>
    </reaction>
</comment>
<comment type="pathway">
    <text evidence="1">Quinol/quinone metabolism; 1,4-dihydroxy-2-naphthoate biosynthesis; 1,4-dihydroxy-2-naphthoate from chorismate: step 5/7.</text>
</comment>
<comment type="pathway">
    <text evidence="1">Quinol/quinone metabolism; menaquinone biosynthesis.</text>
</comment>
<comment type="similarity">
    <text evidence="1">Belongs to the ATP-dependent AMP-binding enzyme family. MenE subfamily.</text>
</comment>
<comment type="sequence caution" evidence="2">
    <conflict type="erroneous initiation">
        <sequence resource="EMBL-CDS" id="CAC97011"/>
    </conflict>
</comment>
<name>MENE_LISIN</name>
<feature type="chain" id="PRO_0000193162" description="2-succinylbenzoate--CoA ligase">
    <location>
        <begin position="1"/>
        <end position="467"/>
    </location>
</feature>
<organism>
    <name type="scientific">Listeria innocua serovar 6a (strain ATCC BAA-680 / CLIP 11262)</name>
    <dbReference type="NCBI Taxonomy" id="272626"/>
    <lineage>
        <taxon>Bacteria</taxon>
        <taxon>Bacillati</taxon>
        <taxon>Bacillota</taxon>
        <taxon>Bacilli</taxon>
        <taxon>Bacillales</taxon>
        <taxon>Listeriaceae</taxon>
        <taxon>Listeria</taxon>
    </lineage>
</organism>
<protein>
    <recommendedName>
        <fullName evidence="1">2-succinylbenzoate--CoA ligase</fullName>
        <ecNumber evidence="1">6.2.1.26</ecNumber>
    </recommendedName>
    <alternativeName>
        <fullName evidence="1">o-succinylbenzoyl-CoA synthetase</fullName>
        <shortName evidence="1">OSB-CoA synthetase</shortName>
    </alternativeName>
</protein>